<gene>
    <name evidence="11" type="primary">Salp14</name>
</gene>
<feature type="signal peptide" evidence="1">
    <location>
        <begin position="1"/>
        <end position="21"/>
    </location>
</feature>
<feature type="chain" id="PRO_5004322241" description="Anticoagulant salivary protein 14" evidence="1">
    <location>
        <begin position="22"/>
        <end position="125"/>
    </location>
</feature>
<feature type="region of interest" description="Disordered" evidence="3">
    <location>
        <begin position="75"/>
        <end position="125"/>
    </location>
</feature>
<feature type="region of interest" description="Responsible for anticoagulant activity" evidence="8">
    <location>
        <begin position="91"/>
        <end position="125"/>
    </location>
</feature>
<feature type="compositionally biased region" description="Polar residues" evidence="3">
    <location>
        <begin position="75"/>
        <end position="86"/>
    </location>
</feature>
<feature type="compositionally biased region" description="Basic residues" evidence="3">
    <location>
        <begin position="101"/>
        <end position="118"/>
    </location>
</feature>
<feature type="glycosylation site" description="N-linked (GlcNAc...) asparagine" evidence="2">
    <location>
        <position position="26"/>
    </location>
</feature>
<feature type="glycosylation site" description="N-linked (GlcNAc...) asparagine" evidence="2">
    <location>
        <position position="81"/>
    </location>
</feature>
<feature type="glycosylation site" description="N-linked (GlcNAc...) asparagine" evidence="2">
    <location>
        <position position="87"/>
    </location>
</feature>
<name>SP14_IXOSC</name>
<comment type="function">
    <text evidence="5 6 8">Salivary anticoagulant protein that facilitates blood feeding of adult ticks on vertebrate species (PubMed:12421422, PubMed:14745044, PubMed:34118237). Inhibits host coagulation factor Xa (F10) (PubMed:12421422). Blocks the assembly and/or early activity of the prothrombinase complex (Xa-Va/F10-F5) (PubMed:34118237). Inhibits the lectin pathway of complement system activation in the host (PubMed:34118237).</text>
</comment>
<comment type="subcellular location">
    <subcellularLocation>
        <location evidence="10">Secreted</location>
    </subcellularLocation>
</comment>
<comment type="tissue specificity">
    <text evidence="5 6 7">Salivary gland (at protein level) (PubMed:14745044, PubMed:17038693). Saliva (at protein level) (PubMed:12421422).</text>
</comment>
<comment type="induction">
    <text evidence="4 5">Induced in salivary glands by blood feeding.</text>
</comment>
<comment type="disruption phenotype">
    <text evidence="6 7">RNAi-mediated knockdown results in impaired feeding of adult ticks, observed as decline in the engorgement weights (PubMed:14745044). Decreased ability of salivary gland extracts from adult ticks to inhibit host clotting in vitro; when silenced together with Salp9Pac (PubMed:14745044). No significant effects on the ability of nymphs to feed (PubMed:17038693).</text>
</comment>
<comment type="disruption phenotype">
    <text evidence="7">(Microbial infection) RNAi-mediated knockdown has no significant effects on acquisition of Borrelia burgdorferi by nymphs 72 hours after feeding.</text>
</comment>
<comment type="disruption phenotype">
    <text evidence="7">(Microbial infection) RNAi-mediated knockdown has no significant effects on acquisition of Anaplasma phagocytophilum by nymphs 72 hours after feeding.</text>
</comment>
<comment type="similarity">
    <text evidence="10">Belongs to the salp14 family.</text>
</comment>
<comment type="caution">
    <text evidence="4 8">In one study, the protein was described as an inhibitor of host coagulation factor Xa (F10) (PubMed:11574922). In another report, anticoagulant properties of the protein were attributed to its C-terminus (amino acids 91-125), but no significant effects on factor Xa amidolytic activity were observed using this truncated construct; instead, it was suggested that the peptide blocks the assembly and/or activity of the prothrombinase complex (Xa-Va/F10-F5) (PubMed:34118237).</text>
</comment>
<organism evidence="11">
    <name type="scientific">Ixodes scapularis</name>
    <name type="common">Black-legged tick</name>
    <name type="synonym">Deer tick</name>
    <dbReference type="NCBI Taxonomy" id="6945"/>
    <lineage>
        <taxon>Eukaryota</taxon>
        <taxon>Metazoa</taxon>
        <taxon>Ecdysozoa</taxon>
        <taxon>Arthropoda</taxon>
        <taxon>Chelicerata</taxon>
        <taxon>Arachnida</taxon>
        <taxon>Acari</taxon>
        <taxon>Parasitiformes</taxon>
        <taxon>Ixodida</taxon>
        <taxon>Ixodoidea</taxon>
        <taxon>Ixodidae</taxon>
        <taxon>Ixodinae</taxon>
        <taxon>Ixodes</taxon>
    </lineage>
</organism>
<protein>
    <recommendedName>
        <fullName evidence="9">Anticoagulant salivary protein 14</fullName>
    </recommendedName>
    <alternativeName>
        <fullName evidence="11">14 kDa salivary gland protein</fullName>
    </alternativeName>
</protein>
<sequence>MGLTGTMLVLVSLAFFGSAAAHNCQNGTRPASEQDREGCDYYCWNAETKSWDQFFFGNGEKCFYNSGDHGTCQNGECHLTNNSGGPNETDDYTPAPTEKPKQKKKKTKKTKKPKRKSKKDQEKNL</sequence>
<evidence type="ECO:0000255" key="1"/>
<evidence type="ECO:0000255" key="2">
    <source>
        <dbReference type="PROSITE-ProRule" id="PRU00498"/>
    </source>
</evidence>
<evidence type="ECO:0000256" key="3">
    <source>
        <dbReference type="SAM" id="MobiDB-lite"/>
    </source>
</evidence>
<evidence type="ECO:0000269" key="4">
    <source>
    </source>
</evidence>
<evidence type="ECO:0000269" key="5">
    <source>
    </source>
</evidence>
<evidence type="ECO:0000269" key="6">
    <source>
    </source>
</evidence>
<evidence type="ECO:0000269" key="7">
    <source>
    </source>
</evidence>
<evidence type="ECO:0000269" key="8">
    <source>
    </source>
</evidence>
<evidence type="ECO:0000303" key="9">
    <source>
    </source>
</evidence>
<evidence type="ECO:0000305" key="10"/>
<evidence type="ECO:0000312" key="11">
    <source>
        <dbReference type="EMBL" id="AAK97824.1"/>
    </source>
</evidence>
<reference evidence="11" key="1">
    <citation type="journal article" date="2001" name="J. Infect. Dis.">
        <title>Salp25D, an Ixodes scapularis antioxidant, is 1 of 14 immunodominant antigens in engorged tick salivary glands.</title>
        <authorList>
            <person name="Das S."/>
            <person name="Banerjee G."/>
            <person name="DePonte K."/>
            <person name="Marcantonio N."/>
            <person name="Kantor F.S."/>
            <person name="Fikrig E."/>
        </authorList>
    </citation>
    <scope>NUCLEOTIDE SEQUENCE [MRNA]</scope>
    <scope>INDUCTION BY BLOOD FEEDING</scope>
</reference>
<reference evidence="10" key="2">
    <citation type="journal article" date="2002" name="Insect Mol. Biol.">
        <title>A novel family of anticoagulants from the saliva of Ixodes scapularis.</title>
        <authorList>
            <person name="Narasimhan S."/>
            <person name="Koski R.A."/>
            <person name="Beaulieu B."/>
            <person name="Anderson J.F."/>
            <person name="Ramamoorthi N."/>
            <person name="Kantor F."/>
            <person name="Cappello M."/>
            <person name="Fikrig E."/>
        </authorList>
    </citation>
    <scope>FUNCTION</scope>
    <scope>TISSUE SPECIFICITY</scope>
    <scope>INDUCTION BY BLOOD FEEDING</scope>
</reference>
<reference evidence="10" key="3">
    <citation type="journal article" date="2004" name="Proc. Natl. Acad. Sci. U.S.A.">
        <title>Disruption of Ixodes scapularis anticoagulation by using RNA interference.</title>
        <authorList>
            <person name="Narasimhan S."/>
            <person name="Montgomery R.R."/>
            <person name="DePonte K."/>
            <person name="Tschudi C."/>
            <person name="Marcantonio N."/>
            <person name="Anderson J.F."/>
            <person name="Sauer J.R."/>
            <person name="Cappello M."/>
            <person name="Kantor F.S."/>
            <person name="Fikrig E."/>
        </authorList>
    </citation>
    <scope>FUNCTION</scope>
    <scope>TISSUE SPECIFICITY</scope>
    <scope>DISRUPTION PHENOTYPE</scope>
</reference>
<reference evidence="10" key="4">
    <citation type="journal article" date="2006" name="Am. J. Trop. Med. Hyg.">
        <title>Disruption of the salivary protein 14 in Ixodes scapularis nymphs and impact on pathogen acquisition.</title>
        <authorList>
            <person name="Pedra J.H."/>
            <person name="Narasimhan S."/>
            <person name="Deponte K."/>
            <person name="Marcantonio N."/>
            <person name="Kantor F.S."/>
            <person name="Fikrig E."/>
        </authorList>
    </citation>
    <scope>TISSUE SPECIFICITY</scope>
    <scope>DISRUPTION PHENOTYPE</scope>
    <scope>DISRUPTION PHENOTYPE (MICROBIAL INFECTION)</scope>
</reference>
<reference evidence="10" key="5">
    <citation type="journal article" date="2021" name="J. Biol. Chem.">
        <title>Molecular basis of anticoagulant and anticomplement activity of the tick salivary protein Salp14 and its homologs.</title>
        <authorList>
            <person name="Denisov S.S."/>
            <person name="Ippel J.H."/>
            <person name="Castoldi E."/>
            <person name="Mans B.J."/>
            <person name="Hackeng T.M."/>
            <person name="Dijkgraaf I."/>
        </authorList>
    </citation>
    <scope>FUNCTION</scope>
    <scope>REGION</scope>
</reference>
<accession>Q95WY7</accession>
<proteinExistence type="evidence at protein level"/>
<dbReference type="EMBL" id="AF209921">
    <property type="protein sequence ID" value="AAK97824.1"/>
    <property type="molecule type" value="mRNA"/>
</dbReference>
<dbReference type="VEuPathDB" id="VectorBase:ISCI012239"/>
<dbReference type="VEuPathDB" id="VectorBase:ISCP_021109"/>
<dbReference type="VEuPathDB" id="VectorBase:ISCW013959"/>
<dbReference type="Proteomes" id="UP000001555">
    <property type="component" value="Unplaced"/>
</dbReference>
<dbReference type="GO" id="GO:0005576">
    <property type="term" value="C:extracellular region"/>
    <property type="evidence" value="ECO:0007669"/>
    <property type="project" value="UniProtKB-SubCell"/>
</dbReference>
<dbReference type="GO" id="GO:0090729">
    <property type="term" value="F:toxin activity"/>
    <property type="evidence" value="ECO:0007669"/>
    <property type="project" value="UniProtKB-KW"/>
</dbReference>
<dbReference type="CDD" id="cd23501">
    <property type="entry name" value="TSLPI_Salp14_NTD"/>
    <property type="match status" value="1"/>
</dbReference>
<dbReference type="InterPro" id="IPR011694">
    <property type="entry name" value="Ixonnexin-like"/>
</dbReference>
<dbReference type="Pfam" id="PF07771">
    <property type="entry name" value="TSGP1"/>
    <property type="match status" value="1"/>
</dbReference>
<keyword id="KW-1203">Blood coagulation cascade inhibiting toxin</keyword>
<keyword id="KW-0325">Glycoprotein</keyword>
<keyword id="KW-1199">Hemostasis impairing toxin</keyword>
<keyword id="KW-1185">Reference proteome</keyword>
<keyword id="KW-0964">Secreted</keyword>
<keyword id="KW-0732">Signal</keyword>
<keyword id="KW-0800">Toxin</keyword>